<comment type="function">
    <text evidence="1">Member of the two-component regulatory system NarS/NarL that regulates genes involved in aerobic nitrate metabolism. Upon phosphorylation by NarS, functions as a transcription regulator by direct binding to promoter regions of target genes together with DevR to regulate their expression during aerobic nitrate metabolism.</text>
</comment>
<comment type="subunit">
    <text evidence="1">Monomer in solution. Interacts with DevR.</text>
</comment>
<comment type="subcellular location">
    <subcellularLocation>
        <location evidence="4">Cytoplasm</location>
    </subcellularLocation>
</comment>
<comment type="PTM">
    <text evidence="1">Phosphorylated by NarS.</text>
</comment>
<keyword id="KW-0963">Cytoplasm</keyword>
<keyword id="KW-0238">DNA-binding</keyword>
<keyword id="KW-0597">Phosphoprotein</keyword>
<keyword id="KW-1185">Reference proteome</keyword>
<keyword id="KW-0804">Transcription</keyword>
<keyword id="KW-0805">Transcription regulation</keyword>
<keyword id="KW-0902">Two-component regulatory system</keyword>
<feature type="chain" id="PRO_0000428336" description="Probable transcriptional regulatory protein NarL">
    <location>
        <begin position="1"/>
        <end position="216"/>
    </location>
</feature>
<feature type="domain" description="Response regulatory" evidence="2">
    <location>
        <begin position="10"/>
        <end position="126"/>
    </location>
</feature>
<feature type="domain" description="HTH luxR-type" evidence="3">
    <location>
        <begin position="148"/>
        <end position="213"/>
    </location>
</feature>
<feature type="DNA-binding region" description="H-T-H motif" evidence="3">
    <location>
        <begin position="172"/>
        <end position="191"/>
    </location>
</feature>
<feature type="modified residue" description="4-aspartylphosphate" evidence="1 2">
    <location>
        <position position="61"/>
    </location>
</feature>
<gene>
    <name type="primary">narL</name>
    <name type="ordered locus">MT0866</name>
</gene>
<sequence length="216" mass="22916">MSNPQPEKVRVVVGDDHPLFREGVVRALSLSGSVNVVGEADDGAAALELIKAHLPDVALLDYRMPGMDGAQVAAAVRSYELPTRVLLISAHDEPAIVYQALQQGAAGFLLKDSTRTEIVKAVLDCAKGRDVVAPSLVGGLAGEIRQRAAPVAPVLSAREREVLNRIACGQSIPAIAAELYVAPSTVKTHVQRLYEKLGVSDRAAAVAEAMRQRLLD</sequence>
<dbReference type="EMBL" id="AE000516">
    <property type="protein sequence ID" value="AAK45109.1"/>
    <property type="molecule type" value="Genomic_DNA"/>
</dbReference>
<dbReference type="PIR" id="D70813">
    <property type="entry name" value="D70813"/>
</dbReference>
<dbReference type="RefSeq" id="WP_003404388.1">
    <property type="nucleotide sequence ID" value="NZ_KK341227.1"/>
</dbReference>
<dbReference type="SMR" id="P9WGM4"/>
<dbReference type="GeneID" id="45424810"/>
<dbReference type="KEGG" id="mtc:MT0866"/>
<dbReference type="PATRIC" id="fig|83331.31.peg.930"/>
<dbReference type="HOGENOM" id="CLU_000445_90_10_11"/>
<dbReference type="Proteomes" id="UP000001020">
    <property type="component" value="Chromosome"/>
</dbReference>
<dbReference type="GO" id="GO:0005737">
    <property type="term" value="C:cytoplasm"/>
    <property type="evidence" value="ECO:0007669"/>
    <property type="project" value="UniProtKB-SubCell"/>
</dbReference>
<dbReference type="GO" id="GO:0003677">
    <property type="term" value="F:DNA binding"/>
    <property type="evidence" value="ECO:0007669"/>
    <property type="project" value="UniProtKB-KW"/>
</dbReference>
<dbReference type="GO" id="GO:0000160">
    <property type="term" value="P:phosphorelay signal transduction system"/>
    <property type="evidence" value="ECO:0007669"/>
    <property type="project" value="UniProtKB-KW"/>
</dbReference>
<dbReference type="GO" id="GO:0006355">
    <property type="term" value="P:regulation of DNA-templated transcription"/>
    <property type="evidence" value="ECO:0007669"/>
    <property type="project" value="InterPro"/>
</dbReference>
<dbReference type="CDD" id="cd06170">
    <property type="entry name" value="LuxR_C_like"/>
    <property type="match status" value="1"/>
</dbReference>
<dbReference type="CDD" id="cd17535">
    <property type="entry name" value="REC_NarL-like"/>
    <property type="match status" value="1"/>
</dbReference>
<dbReference type="Gene3D" id="3.40.50.2300">
    <property type="match status" value="1"/>
</dbReference>
<dbReference type="InterPro" id="IPR011006">
    <property type="entry name" value="CheY-like_superfamily"/>
</dbReference>
<dbReference type="InterPro" id="IPR016032">
    <property type="entry name" value="Sig_transdc_resp-reg_C-effctor"/>
</dbReference>
<dbReference type="InterPro" id="IPR001789">
    <property type="entry name" value="Sig_transdc_resp-reg_receiver"/>
</dbReference>
<dbReference type="InterPro" id="IPR000792">
    <property type="entry name" value="Tscrpt_reg_LuxR_C"/>
</dbReference>
<dbReference type="InterPro" id="IPR039420">
    <property type="entry name" value="WalR-like"/>
</dbReference>
<dbReference type="PANTHER" id="PTHR43214:SF24">
    <property type="entry name" value="TRANSCRIPTIONAL REGULATORY PROTEIN NARL-RELATED"/>
    <property type="match status" value="1"/>
</dbReference>
<dbReference type="PANTHER" id="PTHR43214">
    <property type="entry name" value="TWO-COMPONENT RESPONSE REGULATOR"/>
    <property type="match status" value="1"/>
</dbReference>
<dbReference type="Pfam" id="PF00196">
    <property type="entry name" value="GerE"/>
    <property type="match status" value="1"/>
</dbReference>
<dbReference type="Pfam" id="PF00072">
    <property type="entry name" value="Response_reg"/>
    <property type="match status" value="1"/>
</dbReference>
<dbReference type="PRINTS" id="PR00038">
    <property type="entry name" value="HTHLUXR"/>
</dbReference>
<dbReference type="SMART" id="SM00421">
    <property type="entry name" value="HTH_LUXR"/>
    <property type="match status" value="1"/>
</dbReference>
<dbReference type="SMART" id="SM00448">
    <property type="entry name" value="REC"/>
    <property type="match status" value="1"/>
</dbReference>
<dbReference type="SUPFAM" id="SSF46894">
    <property type="entry name" value="C-terminal effector domain of the bipartite response regulators"/>
    <property type="match status" value="1"/>
</dbReference>
<dbReference type="SUPFAM" id="SSF52172">
    <property type="entry name" value="CheY-like"/>
    <property type="match status" value="1"/>
</dbReference>
<dbReference type="PROSITE" id="PS50043">
    <property type="entry name" value="HTH_LUXR_2"/>
    <property type="match status" value="1"/>
</dbReference>
<dbReference type="PROSITE" id="PS50110">
    <property type="entry name" value="RESPONSE_REGULATORY"/>
    <property type="match status" value="1"/>
</dbReference>
<organism>
    <name type="scientific">Mycobacterium tuberculosis (strain CDC 1551 / Oshkosh)</name>
    <dbReference type="NCBI Taxonomy" id="83331"/>
    <lineage>
        <taxon>Bacteria</taxon>
        <taxon>Bacillati</taxon>
        <taxon>Actinomycetota</taxon>
        <taxon>Actinomycetes</taxon>
        <taxon>Mycobacteriales</taxon>
        <taxon>Mycobacteriaceae</taxon>
        <taxon>Mycobacterium</taxon>
        <taxon>Mycobacterium tuberculosis complex</taxon>
    </lineage>
</organism>
<evidence type="ECO:0000250" key="1">
    <source>
        <dbReference type="UniProtKB" id="P9WGM5"/>
    </source>
</evidence>
<evidence type="ECO:0000255" key="2">
    <source>
        <dbReference type="PROSITE-ProRule" id="PRU00169"/>
    </source>
</evidence>
<evidence type="ECO:0000255" key="3">
    <source>
        <dbReference type="PROSITE-ProRule" id="PRU00411"/>
    </source>
</evidence>
<evidence type="ECO:0000305" key="4"/>
<name>NARL_MYCTO</name>
<reference key="1">
    <citation type="journal article" date="2002" name="J. Bacteriol.">
        <title>Whole-genome comparison of Mycobacterium tuberculosis clinical and laboratory strains.</title>
        <authorList>
            <person name="Fleischmann R.D."/>
            <person name="Alland D."/>
            <person name="Eisen J.A."/>
            <person name="Carpenter L."/>
            <person name="White O."/>
            <person name="Peterson J.D."/>
            <person name="DeBoy R.T."/>
            <person name="Dodson R.J."/>
            <person name="Gwinn M.L."/>
            <person name="Haft D.H."/>
            <person name="Hickey E.K."/>
            <person name="Kolonay J.F."/>
            <person name="Nelson W.C."/>
            <person name="Umayam L.A."/>
            <person name="Ermolaeva M.D."/>
            <person name="Salzberg S.L."/>
            <person name="Delcher A."/>
            <person name="Utterback T.R."/>
            <person name="Weidman J.F."/>
            <person name="Khouri H.M."/>
            <person name="Gill J."/>
            <person name="Mikula A."/>
            <person name="Bishai W."/>
            <person name="Jacobs W.R. Jr."/>
            <person name="Venter J.C."/>
            <person name="Fraser C.M."/>
        </authorList>
    </citation>
    <scope>NUCLEOTIDE SEQUENCE [LARGE SCALE GENOMIC DNA]</scope>
    <source>
        <strain>CDC 1551 / Oshkosh</strain>
    </source>
</reference>
<proteinExistence type="inferred from homology"/>
<accession>P9WGM4</accession>
<accession>L0T7W4</accession>
<accession>O53856</accession>
<accession>Q7D965</accession>
<protein>
    <recommendedName>
        <fullName>Probable transcriptional regulatory protein NarL</fullName>
    </recommendedName>
</protein>